<feature type="chain" id="PRO_0000107535" description="Acetate kinase">
    <location>
        <begin position="1"/>
        <end position="399"/>
    </location>
</feature>
<feature type="active site" description="Proton donor/acceptor" evidence="1">
    <location>
        <position position="148"/>
    </location>
</feature>
<feature type="binding site" evidence="1">
    <location>
        <position position="7"/>
    </location>
    <ligand>
        <name>Mg(2+)</name>
        <dbReference type="ChEBI" id="CHEBI:18420"/>
    </ligand>
</feature>
<feature type="binding site" evidence="1">
    <location>
        <position position="14"/>
    </location>
    <ligand>
        <name>ATP</name>
        <dbReference type="ChEBI" id="CHEBI:30616"/>
    </ligand>
</feature>
<feature type="binding site" evidence="1">
    <location>
        <position position="91"/>
    </location>
    <ligand>
        <name>substrate</name>
    </ligand>
</feature>
<feature type="binding site" evidence="1">
    <location>
        <begin position="208"/>
        <end position="212"/>
    </location>
    <ligand>
        <name>ATP</name>
        <dbReference type="ChEBI" id="CHEBI:30616"/>
    </ligand>
</feature>
<feature type="binding site" evidence="1">
    <location>
        <begin position="283"/>
        <end position="285"/>
    </location>
    <ligand>
        <name>ATP</name>
        <dbReference type="ChEBI" id="CHEBI:30616"/>
    </ligand>
</feature>
<feature type="binding site" evidence="1">
    <location>
        <begin position="331"/>
        <end position="335"/>
    </location>
    <ligand>
        <name>ATP</name>
        <dbReference type="ChEBI" id="CHEBI:30616"/>
    </ligand>
</feature>
<feature type="binding site" evidence="1">
    <location>
        <position position="385"/>
    </location>
    <ligand>
        <name>Mg(2+)</name>
        <dbReference type="ChEBI" id="CHEBI:18420"/>
    </ligand>
</feature>
<feature type="site" description="Transition state stabilizer" evidence="1">
    <location>
        <position position="180"/>
    </location>
</feature>
<feature type="site" description="Transition state stabilizer" evidence="1">
    <location>
        <position position="241"/>
    </location>
</feature>
<evidence type="ECO:0000255" key="1">
    <source>
        <dbReference type="HAMAP-Rule" id="MF_00020"/>
    </source>
</evidence>
<comment type="function">
    <text evidence="1">Catalyzes the formation of acetyl phosphate from acetate and ATP. Can also catalyze the reverse reaction.</text>
</comment>
<comment type="catalytic activity">
    <reaction evidence="1">
        <text>acetate + ATP = acetyl phosphate + ADP</text>
        <dbReference type="Rhea" id="RHEA:11352"/>
        <dbReference type="ChEBI" id="CHEBI:22191"/>
        <dbReference type="ChEBI" id="CHEBI:30089"/>
        <dbReference type="ChEBI" id="CHEBI:30616"/>
        <dbReference type="ChEBI" id="CHEBI:456216"/>
        <dbReference type="EC" id="2.7.2.1"/>
    </reaction>
</comment>
<comment type="cofactor">
    <cofactor evidence="1">
        <name>Mg(2+)</name>
        <dbReference type="ChEBI" id="CHEBI:18420"/>
    </cofactor>
    <cofactor evidence="1">
        <name>Mn(2+)</name>
        <dbReference type="ChEBI" id="CHEBI:29035"/>
    </cofactor>
    <text evidence="1">Mg(2+). Can also accept Mn(2+).</text>
</comment>
<comment type="pathway">
    <text evidence="1">Metabolic intermediate biosynthesis; acetyl-CoA biosynthesis; acetyl-CoA from acetate: step 1/2.</text>
</comment>
<comment type="subunit">
    <text evidence="1">Homodimer.</text>
</comment>
<comment type="subcellular location">
    <subcellularLocation>
        <location evidence="1">Cytoplasm</location>
    </subcellularLocation>
</comment>
<comment type="similarity">
    <text evidence="1">Belongs to the acetokinase family.</text>
</comment>
<sequence>MKILVLNCGSSSIKYKLFDMTTKEVIAQGGIEKIGLKGSFLKLTLPNGEKKVLEKDIPEHTIGVEFILNTLISPEYGAIKSLDEINAVGHRMVHGGERFSESVLLNKEVLEAFAACNDLAPLHNPANLKGVNAVSAILPNIPQVGVFDTAFHQTMPDYAYMYAIPYEMYEKYGVRRYGFHGTSHRYVSKRVCEFLGVNPVGQKIITCHIGNGGSIAAIKDGKCIDTTMGLTPLEGLMMGTRSGDIDAGAVTFIMEKEGLNTTGISNLLNKKSGVLGISGVSSDMRELLAACANGNERAILAEKMYYYRIKKYIGAYAAALGGVDIILFTGGVGENQFECRESVCKDMEFMGIKLDNNVNAKVRGEEAIISTADSKVKVVVIPTDEELLIASDTMDILKK</sequence>
<accession>Q8A1G8</accession>
<gene>
    <name evidence="1" type="primary">ackA</name>
    <name type="ordered locus">BT_3693</name>
</gene>
<organism>
    <name type="scientific">Bacteroides thetaiotaomicron (strain ATCC 29148 / DSM 2079 / JCM 5827 / CCUG 10774 / NCTC 10582 / VPI-5482 / E50)</name>
    <dbReference type="NCBI Taxonomy" id="226186"/>
    <lineage>
        <taxon>Bacteria</taxon>
        <taxon>Pseudomonadati</taxon>
        <taxon>Bacteroidota</taxon>
        <taxon>Bacteroidia</taxon>
        <taxon>Bacteroidales</taxon>
        <taxon>Bacteroidaceae</taxon>
        <taxon>Bacteroides</taxon>
    </lineage>
</organism>
<name>ACKA_BACTN</name>
<reference key="1">
    <citation type="journal article" date="2003" name="Science">
        <title>A genomic view of the human-Bacteroides thetaiotaomicron symbiosis.</title>
        <authorList>
            <person name="Xu J."/>
            <person name="Bjursell M.K."/>
            <person name="Himrod J."/>
            <person name="Deng S."/>
            <person name="Carmichael L.K."/>
            <person name="Chiang H.C."/>
            <person name="Hooper L.V."/>
            <person name="Gordon J.I."/>
        </authorList>
    </citation>
    <scope>NUCLEOTIDE SEQUENCE [LARGE SCALE GENOMIC DNA]</scope>
    <source>
        <strain>ATCC 29148 / DSM 2079 / JCM 5827 / CCUG 10774 / NCTC 10582 / VPI-5482 / E50</strain>
    </source>
</reference>
<protein>
    <recommendedName>
        <fullName evidence="1">Acetate kinase</fullName>
        <ecNumber evidence="1">2.7.2.1</ecNumber>
    </recommendedName>
    <alternativeName>
        <fullName evidence="1">Acetokinase</fullName>
    </alternativeName>
</protein>
<dbReference type="EC" id="2.7.2.1" evidence="1"/>
<dbReference type="EMBL" id="AE015928">
    <property type="protein sequence ID" value="AAO78798.1"/>
    <property type="molecule type" value="Genomic_DNA"/>
</dbReference>
<dbReference type="RefSeq" id="NP_812604.1">
    <property type="nucleotide sequence ID" value="NC_004663.1"/>
</dbReference>
<dbReference type="RefSeq" id="WP_008762632.1">
    <property type="nucleotide sequence ID" value="NC_004663.1"/>
</dbReference>
<dbReference type="SMR" id="Q8A1G8"/>
<dbReference type="FunCoup" id="Q8A1G8">
    <property type="interactions" value="343"/>
</dbReference>
<dbReference type="STRING" id="226186.BT_3693"/>
<dbReference type="PaxDb" id="226186-BT_3693"/>
<dbReference type="EnsemblBacteria" id="AAO78798">
    <property type="protein sequence ID" value="AAO78798"/>
    <property type="gene ID" value="BT_3693"/>
</dbReference>
<dbReference type="GeneID" id="60924862"/>
<dbReference type="KEGG" id="bth:BT_3693"/>
<dbReference type="PATRIC" id="fig|226186.12.peg.3753"/>
<dbReference type="eggNOG" id="COG0282">
    <property type="taxonomic scope" value="Bacteria"/>
</dbReference>
<dbReference type="HOGENOM" id="CLU_020352_0_1_10"/>
<dbReference type="InParanoid" id="Q8A1G8"/>
<dbReference type="OrthoDB" id="9802453at2"/>
<dbReference type="UniPathway" id="UPA00340">
    <property type="reaction ID" value="UER00458"/>
</dbReference>
<dbReference type="Proteomes" id="UP000001414">
    <property type="component" value="Chromosome"/>
</dbReference>
<dbReference type="GO" id="GO:0005737">
    <property type="term" value="C:cytoplasm"/>
    <property type="evidence" value="ECO:0007669"/>
    <property type="project" value="UniProtKB-SubCell"/>
</dbReference>
<dbReference type="GO" id="GO:0008776">
    <property type="term" value="F:acetate kinase activity"/>
    <property type="evidence" value="ECO:0000318"/>
    <property type="project" value="GO_Central"/>
</dbReference>
<dbReference type="GO" id="GO:0005524">
    <property type="term" value="F:ATP binding"/>
    <property type="evidence" value="ECO:0007669"/>
    <property type="project" value="UniProtKB-KW"/>
</dbReference>
<dbReference type="GO" id="GO:0000287">
    <property type="term" value="F:magnesium ion binding"/>
    <property type="evidence" value="ECO:0007669"/>
    <property type="project" value="UniProtKB-UniRule"/>
</dbReference>
<dbReference type="GO" id="GO:0006083">
    <property type="term" value="P:acetate metabolic process"/>
    <property type="evidence" value="ECO:0000318"/>
    <property type="project" value="GO_Central"/>
</dbReference>
<dbReference type="GO" id="GO:0006085">
    <property type="term" value="P:acetyl-CoA biosynthetic process"/>
    <property type="evidence" value="ECO:0007669"/>
    <property type="project" value="UniProtKB-UniRule"/>
</dbReference>
<dbReference type="CDD" id="cd24010">
    <property type="entry name" value="ASKHA_NBD_AcK_PK"/>
    <property type="match status" value="1"/>
</dbReference>
<dbReference type="Gene3D" id="3.30.420.40">
    <property type="match status" value="2"/>
</dbReference>
<dbReference type="HAMAP" id="MF_00020">
    <property type="entry name" value="Acetate_kinase"/>
    <property type="match status" value="1"/>
</dbReference>
<dbReference type="InterPro" id="IPR004372">
    <property type="entry name" value="Ac/propionate_kinase"/>
</dbReference>
<dbReference type="InterPro" id="IPR000890">
    <property type="entry name" value="Aliphatic_acid_kin_short-chain"/>
</dbReference>
<dbReference type="InterPro" id="IPR023865">
    <property type="entry name" value="Aliphatic_acid_kinase_CS"/>
</dbReference>
<dbReference type="InterPro" id="IPR043129">
    <property type="entry name" value="ATPase_NBD"/>
</dbReference>
<dbReference type="NCBIfam" id="TIGR00016">
    <property type="entry name" value="ackA"/>
    <property type="match status" value="1"/>
</dbReference>
<dbReference type="PANTHER" id="PTHR21060">
    <property type="entry name" value="ACETATE KINASE"/>
    <property type="match status" value="1"/>
</dbReference>
<dbReference type="PANTHER" id="PTHR21060:SF15">
    <property type="entry name" value="ACETATE KINASE-RELATED"/>
    <property type="match status" value="1"/>
</dbReference>
<dbReference type="Pfam" id="PF00871">
    <property type="entry name" value="Acetate_kinase"/>
    <property type="match status" value="1"/>
</dbReference>
<dbReference type="PIRSF" id="PIRSF000722">
    <property type="entry name" value="Acetate_prop_kin"/>
    <property type="match status" value="1"/>
</dbReference>
<dbReference type="PRINTS" id="PR00471">
    <property type="entry name" value="ACETATEKNASE"/>
</dbReference>
<dbReference type="SUPFAM" id="SSF53067">
    <property type="entry name" value="Actin-like ATPase domain"/>
    <property type="match status" value="2"/>
</dbReference>
<dbReference type="PROSITE" id="PS01075">
    <property type="entry name" value="ACETATE_KINASE_1"/>
    <property type="match status" value="1"/>
</dbReference>
<dbReference type="PROSITE" id="PS01076">
    <property type="entry name" value="ACETATE_KINASE_2"/>
    <property type="match status" value="1"/>
</dbReference>
<proteinExistence type="inferred from homology"/>
<keyword id="KW-0067">ATP-binding</keyword>
<keyword id="KW-0963">Cytoplasm</keyword>
<keyword id="KW-0418">Kinase</keyword>
<keyword id="KW-0460">Magnesium</keyword>
<keyword id="KW-0479">Metal-binding</keyword>
<keyword id="KW-0547">Nucleotide-binding</keyword>
<keyword id="KW-1185">Reference proteome</keyword>
<keyword id="KW-0808">Transferase</keyword>